<reference key="1">
    <citation type="submission" date="2007-09" db="EMBL/GenBank/DDBJ databases">
        <title>Complete sequence of chromosome of Serratia proteamaculans 568.</title>
        <authorList>
            <consortium name="US DOE Joint Genome Institute"/>
            <person name="Copeland A."/>
            <person name="Lucas S."/>
            <person name="Lapidus A."/>
            <person name="Barry K."/>
            <person name="Glavina del Rio T."/>
            <person name="Dalin E."/>
            <person name="Tice H."/>
            <person name="Pitluck S."/>
            <person name="Chain P."/>
            <person name="Malfatti S."/>
            <person name="Shin M."/>
            <person name="Vergez L."/>
            <person name="Schmutz J."/>
            <person name="Larimer F."/>
            <person name="Land M."/>
            <person name="Hauser L."/>
            <person name="Kyrpides N."/>
            <person name="Kim E."/>
            <person name="Taghavi S."/>
            <person name="Newman L."/>
            <person name="Vangronsveld J."/>
            <person name="van der Lelie D."/>
            <person name="Richardson P."/>
        </authorList>
    </citation>
    <scope>NUCLEOTIDE SEQUENCE [LARGE SCALE GENOMIC DNA]</scope>
    <source>
        <strain>568</strain>
    </source>
</reference>
<keyword id="KW-0067">ATP-binding</keyword>
<keyword id="KW-0963">Cytoplasm</keyword>
<keyword id="KW-0418">Kinase</keyword>
<keyword id="KW-0520">NAD</keyword>
<keyword id="KW-0521">NADP</keyword>
<keyword id="KW-0547">Nucleotide-binding</keyword>
<keyword id="KW-0808">Transferase</keyword>
<sequence>MNKKFACIGIVGHPRHPSALATHEMLFHWLVARGYSVMVERQIAQDLGLKDAVTGSLAEIGQKADLAVVVGGDGNMLGAARVLARYDIKVIGVNRGNLGFLTDLDPDNALQQLADVLEGEYIDEQRFLLETIVHKENQQCRISTAINEVVLHPGKVAHMIEFEVYIDDRFAFSQRSDGLIIATPTGSTAYSLSAGGPILTPSLEAIALVPMFPHTLSARPLVINGNSTIRLKFSQIGSDLEISCDSQIALPIQEGEEVLIRRSDFHLNLIHPKDYSYFNTLSTKLGWSKKLF</sequence>
<dbReference type="EC" id="2.7.1.23" evidence="1"/>
<dbReference type="EMBL" id="CP000826">
    <property type="protein sequence ID" value="ABV42781.1"/>
    <property type="molecule type" value="Genomic_DNA"/>
</dbReference>
<dbReference type="SMR" id="A8GI41"/>
<dbReference type="STRING" id="399741.Spro_3685"/>
<dbReference type="KEGG" id="spe:Spro_3685"/>
<dbReference type="eggNOG" id="COG0061">
    <property type="taxonomic scope" value="Bacteria"/>
</dbReference>
<dbReference type="HOGENOM" id="CLU_008831_0_1_6"/>
<dbReference type="OrthoDB" id="9774737at2"/>
<dbReference type="GO" id="GO:0005737">
    <property type="term" value="C:cytoplasm"/>
    <property type="evidence" value="ECO:0007669"/>
    <property type="project" value="UniProtKB-SubCell"/>
</dbReference>
<dbReference type="GO" id="GO:0005524">
    <property type="term" value="F:ATP binding"/>
    <property type="evidence" value="ECO:0007669"/>
    <property type="project" value="UniProtKB-KW"/>
</dbReference>
<dbReference type="GO" id="GO:0046872">
    <property type="term" value="F:metal ion binding"/>
    <property type="evidence" value="ECO:0007669"/>
    <property type="project" value="UniProtKB-UniRule"/>
</dbReference>
<dbReference type="GO" id="GO:0051287">
    <property type="term" value="F:NAD binding"/>
    <property type="evidence" value="ECO:0007669"/>
    <property type="project" value="UniProtKB-ARBA"/>
</dbReference>
<dbReference type="GO" id="GO:0003951">
    <property type="term" value="F:NAD+ kinase activity"/>
    <property type="evidence" value="ECO:0007669"/>
    <property type="project" value="UniProtKB-UniRule"/>
</dbReference>
<dbReference type="GO" id="GO:0019674">
    <property type="term" value="P:NAD metabolic process"/>
    <property type="evidence" value="ECO:0007669"/>
    <property type="project" value="InterPro"/>
</dbReference>
<dbReference type="GO" id="GO:0006741">
    <property type="term" value="P:NADP biosynthetic process"/>
    <property type="evidence" value="ECO:0007669"/>
    <property type="project" value="UniProtKB-UniRule"/>
</dbReference>
<dbReference type="FunFam" id="2.60.200.30:FF:000001">
    <property type="entry name" value="NAD kinase"/>
    <property type="match status" value="1"/>
</dbReference>
<dbReference type="FunFam" id="3.40.50.10330:FF:000004">
    <property type="entry name" value="NAD kinase"/>
    <property type="match status" value="1"/>
</dbReference>
<dbReference type="Gene3D" id="3.40.50.10330">
    <property type="entry name" value="Probable inorganic polyphosphate/atp-NAD kinase, domain 1"/>
    <property type="match status" value="1"/>
</dbReference>
<dbReference type="Gene3D" id="2.60.200.30">
    <property type="entry name" value="Probable inorganic polyphosphate/atp-NAD kinase, domain 2"/>
    <property type="match status" value="1"/>
</dbReference>
<dbReference type="HAMAP" id="MF_00361">
    <property type="entry name" value="NAD_kinase"/>
    <property type="match status" value="1"/>
</dbReference>
<dbReference type="InterPro" id="IPR017438">
    <property type="entry name" value="ATP-NAD_kinase_N"/>
</dbReference>
<dbReference type="InterPro" id="IPR017437">
    <property type="entry name" value="ATP-NAD_kinase_PpnK-typ_C"/>
</dbReference>
<dbReference type="InterPro" id="IPR016064">
    <property type="entry name" value="NAD/diacylglycerol_kinase_sf"/>
</dbReference>
<dbReference type="InterPro" id="IPR002504">
    <property type="entry name" value="NADK"/>
</dbReference>
<dbReference type="NCBIfam" id="NF002306">
    <property type="entry name" value="PRK01231.1"/>
    <property type="match status" value="1"/>
</dbReference>
<dbReference type="NCBIfam" id="NF002893">
    <property type="entry name" value="PRK03378.1"/>
    <property type="match status" value="1"/>
</dbReference>
<dbReference type="PANTHER" id="PTHR20275">
    <property type="entry name" value="NAD KINASE"/>
    <property type="match status" value="1"/>
</dbReference>
<dbReference type="PANTHER" id="PTHR20275:SF0">
    <property type="entry name" value="NAD KINASE"/>
    <property type="match status" value="1"/>
</dbReference>
<dbReference type="Pfam" id="PF01513">
    <property type="entry name" value="NAD_kinase"/>
    <property type="match status" value="1"/>
</dbReference>
<dbReference type="Pfam" id="PF20143">
    <property type="entry name" value="NAD_kinase_C"/>
    <property type="match status" value="1"/>
</dbReference>
<dbReference type="SUPFAM" id="SSF111331">
    <property type="entry name" value="NAD kinase/diacylglycerol kinase-like"/>
    <property type="match status" value="1"/>
</dbReference>
<organism>
    <name type="scientific">Serratia proteamaculans (strain 568)</name>
    <dbReference type="NCBI Taxonomy" id="399741"/>
    <lineage>
        <taxon>Bacteria</taxon>
        <taxon>Pseudomonadati</taxon>
        <taxon>Pseudomonadota</taxon>
        <taxon>Gammaproteobacteria</taxon>
        <taxon>Enterobacterales</taxon>
        <taxon>Yersiniaceae</taxon>
        <taxon>Serratia</taxon>
    </lineage>
</organism>
<evidence type="ECO:0000255" key="1">
    <source>
        <dbReference type="HAMAP-Rule" id="MF_00361"/>
    </source>
</evidence>
<gene>
    <name evidence="1" type="primary">nadK</name>
    <name type="ordered locus">Spro_3685</name>
</gene>
<protein>
    <recommendedName>
        <fullName evidence="1">NAD kinase</fullName>
        <ecNumber evidence="1">2.7.1.23</ecNumber>
    </recommendedName>
    <alternativeName>
        <fullName evidence="1">ATP-dependent NAD kinase</fullName>
    </alternativeName>
</protein>
<comment type="function">
    <text evidence="1">Involved in the regulation of the intracellular balance of NAD and NADP, and is a key enzyme in the biosynthesis of NADP. Catalyzes specifically the phosphorylation on 2'-hydroxyl of the adenosine moiety of NAD to yield NADP.</text>
</comment>
<comment type="catalytic activity">
    <reaction evidence="1">
        <text>NAD(+) + ATP = ADP + NADP(+) + H(+)</text>
        <dbReference type="Rhea" id="RHEA:18629"/>
        <dbReference type="ChEBI" id="CHEBI:15378"/>
        <dbReference type="ChEBI" id="CHEBI:30616"/>
        <dbReference type="ChEBI" id="CHEBI:57540"/>
        <dbReference type="ChEBI" id="CHEBI:58349"/>
        <dbReference type="ChEBI" id="CHEBI:456216"/>
        <dbReference type="EC" id="2.7.1.23"/>
    </reaction>
</comment>
<comment type="cofactor">
    <cofactor evidence="1">
        <name>a divalent metal cation</name>
        <dbReference type="ChEBI" id="CHEBI:60240"/>
    </cofactor>
</comment>
<comment type="subcellular location">
    <subcellularLocation>
        <location evidence="1">Cytoplasm</location>
    </subcellularLocation>
</comment>
<comment type="similarity">
    <text evidence="1">Belongs to the NAD kinase family.</text>
</comment>
<accession>A8GI41</accession>
<proteinExistence type="inferred from homology"/>
<feature type="chain" id="PRO_1000079508" description="NAD kinase">
    <location>
        <begin position="1"/>
        <end position="292"/>
    </location>
</feature>
<feature type="active site" description="Proton acceptor" evidence="1">
    <location>
        <position position="73"/>
    </location>
</feature>
<feature type="binding site" evidence="1">
    <location>
        <begin position="73"/>
        <end position="74"/>
    </location>
    <ligand>
        <name>NAD(+)</name>
        <dbReference type="ChEBI" id="CHEBI:57540"/>
    </ligand>
</feature>
<feature type="binding site" evidence="1">
    <location>
        <begin position="147"/>
        <end position="148"/>
    </location>
    <ligand>
        <name>NAD(+)</name>
        <dbReference type="ChEBI" id="CHEBI:57540"/>
    </ligand>
</feature>
<feature type="binding site" evidence="1">
    <location>
        <position position="158"/>
    </location>
    <ligand>
        <name>NAD(+)</name>
        <dbReference type="ChEBI" id="CHEBI:57540"/>
    </ligand>
</feature>
<feature type="binding site" evidence="1">
    <location>
        <position position="175"/>
    </location>
    <ligand>
        <name>NAD(+)</name>
        <dbReference type="ChEBI" id="CHEBI:57540"/>
    </ligand>
</feature>
<feature type="binding site" evidence="1">
    <location>
        <position position="177"/>
    </location>
    <ligand>
        <name>NAD(+)</name>
        <dbReference type="ChEBI" id="CHEBI:57540"/>
    </ligand>
</feature>
<feature type="binding site" evidence="1">
    <location>
        <begin position="188"/>
        <end position="193"/>
    </location>
    <ligand>
        <name>NAD(+)</name>
        <dbReference type="ChEBI" id="CHEBI:57540"/>
    </ligand>
</feature>
<feature type="binding site" evidence="1">
    <location>
        <position position="247"/>
    </location>
    <ligand>
        <name>NAD(+)</name>
        <dbReference type="ChEBI" id="CHEBI:57540"/>
    </ligand>
</feature>
<name>NADK_SERP5</name>